<comment type="subunit">
    <text evidence="2">Component of the mitochondrial ribosome large subunit (39S) which comprises a 16S rRNA and about 50 distinct proteins.</text>
</comment>
<comment type="subcellular location">
    <subcellularLocation>
        <location evidence="2">Mitochondrion</location>
    </subcellularLocation>
</comment>
<comment type="similarity">
    <text evidence="4">Belongs to the universal ribosomal protein uL15 family.</text>
</comment>
<protein>
    <recommendedName>
        <fullName evidence="4">Large ribosomal subunit protein uL15m</fullName>
    </recommendedName>
    <alternativeName>
        <fullName>39S ribosomal protein L15, mitochondrial</fullName>
        <shortName>L15mt</shortName>
        <shortName>MRP-L15</shortName>
    </alternativeName>
</protein>
<reference key="1">
    <citation type="submission" date="2004-07" db="EMBL/GenBank/DDBJ databases">
        <authorList>
            <consortium name="NIH - Xenopus Gene Collection (XGC) project"/>
        </authorList>
    </citation>
    <scope>NUCLEOTIDE SEQUENCE [LARGE SCALE MRNA]</scope>
    <source>
        <tissue>Embryo</tissue>
    </source>
</reference>
<feature type="transit peptide" description="Mitochondrion" evidence="1">
    <location>
        <begin position="1"/>
        <end position="20"/>
    </location>
</feature>
<feature type="chain" id="PRO_0000257843" description="Large ribosomal subunit protein uL15m">
    <location>
        <begin position="21"/>
        <end position="296"/>
    </location>
</feature>
<feature type="region of interest" description="Disordered" evidence="3">
    <location>
        <begin position="25"/>
        <end position="66"/>
    </location>
</feature>
<feature type="compositionally biased region" description="Basic residues" evidence="3">
    <location>
        <begin position="32"/>
        <end position="52"/>
    </location>
</feature>
<sequence length="296" mass="33423">MAASGGSGGKATELLRCLPRVTLANLRPNPGARHREKRRGRGIHGGRKSGRGHKGETQRGNQPRLGFEGGQTPFYLVIPKYGYNEGHSFRRQYQPLSLNRLQYLIDLGRIDPTQPIDLTQLVNARGVTIQPLKRDYGVQLVEEGADLFAAKVNIEVQWASQLAIAAIEKNGGLITTGFYDPRSLDVLCKPVPFFMRGQPIPKRMLPPEDLVKYYTDAENRGYLADPRNVLEARKQLARKYGYVLPDITKDELYQMLSTRKDPRQIFFGLAPGWIVNMPEKKILKPTDERLLSYYSS</sequence>
<organism>
    <name type="scientific">Xenopus laevis</name>
    <name type="common">African clawed frog</name>
    <dbReference type="NCBI Taxonomy" id="8355"/>
    <lineage>
        <taxon>Eukaryota</taxon>
        <taxon>Metazoa</taxon>
        <taxon>Chordata</taxon>
        <taxon>Craniata</taxon>
        <taxon>Vertebrata</taxon>
        <taxon>Euteleostomi</taxon>
        <taxon>Amphibia</taxon>
        <taxon>Batrachia</taxon>
        <taxon>Anura</taxon>
        <taxon>Pipoidea</taxon>
        <taxon>Pipidae</taxon>
        <taxon>Xenopodinae</taxon>
        <taxon>Xenopus</taxon>
        <taxon>Xenopus</taxon>
    </lineage>
</organism>
<name>RM15_XENLA</name>
<accession>Q6AZN4</accession>
<keyword id="KW-0496">Mitochondrion</keyword>
<keyword id="KW-1185">Reference proteome</keyword>
<keyword id="KW-0687">Ribonucleoprotein</keyword>
<keyword id="KW-0689">Ribosomal protein</keyword>
<keyword id="KW-0809">Transit peptide</keyword>
<dbReference type="EMBL" id="BC077536">
    <property type="protein sequence ID" value="AAH77536.1"/>
    <property type="molecule type" value="mRNA"/>
</dbReference>
<dbReference type="RefSeq" id="NP_001086843.1">
    <property type="nucleotide sequence ID" value="NM_001093374.1"/>
</dbReference>
<dbReference type="SMR" id="Q6AZN4"/>
<dbReference type="GeneID" id="446678"/>
<dbReference type="KEGG" id="xla:446678"/>
<dbReference type="AGR" id="Xenbase:XB-GENE-976979"/>
<dbReference type="CTD" id="446678"/>
<dbReference type="Xenbase" id="XB-GENE-976979">
    <property type="gene designation" value="mrpl15.L"/>
</dbReference>
<dbReference type="OrthoDB" id="361383at2759"/>
<dbReference type="Proteomes" id="UP000186698">
    <property type="component" value="Chromosome 6L"/>
</dbReference>
<dbReference type="Bgee" id="446678">
    <property type="expression patterns" value="Expressed in oocyte and 19 other cell types or tissues"/>
</dbReference>
<dbReference type="GO" id="GO:0005762">
    <property type="term" value="C:mitochondrial large ribosomal subunit"/>
    <property type="evidence" value="ECO:0000250"/>
    <property type="project" value="UniProtKB"/>
</dbReference>
<dbReference type="GO" id="GO:0003735">
    <property type="term" value="F:structural constituent of ribosome"/>
    <property type="evidence" value="ECO:0000318"/>
    <property type="project" value="GO_Central"/>
</dbReference>
<dbReference type="GO" id="GO:0006412">
    <property type="term" value="P:translation"/>
    <property type="evidence" value="ECO:0007669"/>
    <property type="project" value="InterPro"/>
</dbReference>
<dbReference type="FunFam" id="3.100.10.10:FF:000006">
    <property type="entry name" value="39S ribosomal protein L15, mitochondrial"/>
    <property type="match status" value="1"/>
</dbReference>
<dbReference type="Gene3D" id="3.100.10.10">
    <property type="match status" value="1"/>
</dbReference>
<dbReference type="HAMAP" id="MF_01341">
    <property type="entry name" value="Ribosomal_uL15"/>
    <property type="match status" value="1"/>
</dbReference>
<dbReference type="InterPro" id="IPR030878">
    <property type="entry name" value="Ribosomal_uL15"/>
</dbReference>
<dbReference type="InterPro" id="IPR021131">
    <property type="entry name" value="Ribosomal_uL15/eL18"/>
</dbReference>
<dbReference type="InterPro" id="IPR036227">
    <property type="entry name" value="Ribosomal_uL15/eL18_sf"/>
</dbReference>
<dbReference type="InterPro" id="IPR005749">
    <property type="entry name" value="Ribosomal_uL15_bac-type"/>
</dbReference>
<dbReference type="NCBIfam" id="TIGR01071">
    <property type="entry name" value="rplO_bact"/>
    <property type="match status" value="1"/>
</dbReference>
<dbReference type="PANTHER" id="PTHR12934">
    <property type="entry name" value="50S RIBOSOMAL PROTEIN L15"/>
    <property type="match status" value="1"/>
</dbReference>
<dbReference type="PANTHER" id="PTHR12934:SF11">
    <property type="entry name" value="LARGE RIBOSOMAL SUBUNIT PROTEIN UL15M"/>
    <property type="match status" value="1"/>
</dbReference>
<dbReference type="Pfam" id="PF00828">
    <property type="entry name" value="Ribosomal_L27A"/>
    <property type="match status" value="1"/>
</dbReference>
<dbReference type="SUPFAM" id="SSF52080">
    <property type="entry name" value="Ribosomal proteins L15p and L18e"/>
    <property type="match status" value="1"/>
</dbReference>
<evidence type="ECO:0000250" key="1">
    <source>
        <dbReference type="UniProtKB" id="Q0VC21"/>
    </source>
</evidence>
<evidence type="ECO:0000250" key="2">
    <source>
        <dbReference type="UniProtKB" id="Q9P015"/>
    </source>
</evidence>
<evidence type="ECO:0000256" key="3">
    <source>
        <dbReference type="SAM" id="MobiDB-lite"/>
    </source>
</evidence>
<evidence type="ECO:0000305" key="4"/>
<gene>
    <name type="primary">mrpl15</name>
</gene>
<proteinExistence type="evidence at transcript level"/>